<sequence>MRSIARRTAVGAALLLVMPVAVWISGWRWQPGEQSWLLKAAFWVTETVTQPWGVITHLILFGWFLWCLRFRIKAAFVLFAILAAAILVGQGVKSWIKDKVQEPRPFVIWLEKTHHIPVDEFYTLKRAERGNLVKEQLAEEKNIPQYLRSHWQKETGFAFPSGHTMFAASWALLAVGLLWPRRRTLTIAILLVWATGVMGSRLLLGMHWPRDLVVATLISWALVAVATWLAQRICGPLTPPAEENREIAQREQES</sequence>
<accession>P0A924</accession>
<accession>P18201</accession>
<proteinExistence type="evidence at protein level"/>
<comment type="function">
    <text evidence="1 3 4 7">Catalyzes the dephosphorylation of diacylglycerol diphosphate (DGPP) to phosphatidate (PA) and the subsequent dephosphorylation of PA to diacylglycerol (DAG). Also has undecaprenyl pyrophosphate phosphatase activity, required for the biosynthesis of the lipid carrier undecaprenyl phosphate. Can also use lysophosphatidic acid (LPA) and phosphatidylglycerophosphate as substrates. The pattern of activities varies according to subcellular location, PGP phosphatase activity is higher in the cytoplasmic membrane, whereas PA and LPA phosphatase activities are higher in the outer membrane. Activity is independent of a divalent cation ion and insensitive to inhibition by N-ethylmaleimide.</text>
</comment>
<comment type="catalytic activity">
    <reaction>
        <text>a 1,2-diacyl-sn-glycero-3-phospho-(1'-sn-glycero-3'-phosphate) + H2O = a 1,2-diacyl-sn-glycero-3-phospho-(1'-sn-glycerol) + phosphate</text>
        <dbReference type="Rhea" id="RHEA:33751"/>
        <dbReference type="ChEBI" id="CHEBI:15377"/>
        <dbReference type="ChEBI" id="CHEBI:43474"/>
        <dbReference type="ChEBI" id="CHEBI:60110"/>
        <dbReference type="ChEBI" id="CHEBI:64716"/>
        <dbReference type="EC" id="3.1.3.27"/>
    </reaction>
</comment>
<comment type="catalytic activity">
    <reaction>
        <text>a 1,2-diacyl-sn-glycerol 3-diphosphate + H2O = a 1,2-diacyl-sn-glycero-3-phosphate + phosphate + H(+)</text>
        <dbReference type="Rhea" id="RHEA:27449"/>
        <dbReference type="ChEBI" id="CHEBI:15377"/>
        <dbReference type="ChEBI" id="CHEBI:15378"/>
        <dbReference type="ChEBI" id="CHEBI:43474"/>
        <dbReference type="ChEBI" id="CHEBI:58608"/>
        <dbReference type="ChEBI" id="CHEBI:59996"/>
        <dbReference type="EC" id="3.6.1.75"/>
    </reaction>
</comment>
<comment type="catalytic activity">
    <reaction>
        <text>a 1,2-diacyl-sn-glycero-3-phosphate + H2O = a 1,2-diacyl-sn-glycerol + phosphate</text>
        <dbReference type="Rhea" id="RHEA:27429"/>
        <dbReference type="ChEBI" id="CHEBI:15377"/>
        <dbReference type="ChEBI" id="CHEBI:17815"/>
        <dbReference type="ChEBI" id="CHEBI:43474"/>
        <dbReference type="ChEBI" id="CHEBI:58608"/>
        <dbReference type="EC" id="3.1.3.4"/>
    </reaction>
</comment>
<comment type="catalytic activity">
    <reaction>
        <text>di-trans,octa-cis-undecaprenyl diphosphate + H2O = di-trans,octa-cis-undecaprenyl phosphate + phosphate + H(+)</text>
        <dbReference type="Rhea" id="RHEA:28094"/>
        <dbReference type="ChEBI" id="CHEBI:15377"/>
        <dbReference type="ChEBI" id="CHEBI:15378"/>
        <dbReference type="ChEBI" id="CHEBI:43474"/>
        <dbReference type="ChEBI" id="CHEBI:58405"/>
        <dbReference type="ChEBI" id="CHEBI:60392"/>
        <dbReference type="EC" id="3.6.1.27"/>
    </reaction>
</comment>
<comment type="activity regulation">
    <text evidence="6">Inhibited by Mn(2+) ions. Inhibited by phosphatidylethanolamine (PE) (PubMed:27405756).</text>
</comment>
<comment type="biophysicochemical properties">
    <kinetics>
        <KM evidence="3 7">530 uM for undecaprenyl pyrophosphate</KM>
        <KM evidence="3 7">96 uM for farnesyl pyrophosphate</KM>
        <KM evidence="3 7">80 uM for diacylglycerol pyrophosphate</KM>
        <KM evidence="3 7">1700 uM for phosphatidate</KM>
        <Vmax evidence="3 7">2167.0 nmol/min/mg enzyme with diacylglycerol pyrophosphate as substrate</Vmax>
        <Vmax evidence="3 7">313.0 nmol/min/mg enzyme with phosphatidate as substrate</Vmax>
    </kinetics>
    <phDependence>
        <text evidence="3 7">Optimum pH is 6.5 for DGPP phosphatase activity and 6.5-7.5 for undecaprenyl pyrophosphate phosphatase activity.</text>
    </phDependence>
</comment>
<comment type="pathway">
    <text>Phospholipid metabolism; phosphatidylglycerol biosynthesis; phosphatidylglycerol from CDP-diacylglycerol: step 2/2.</text>
</comment>
<comment type="subcellular location">
    <subcellularLocation>
        <location evidence="2">Cell inner membrane</location>
        <topology evidence="2">Multi-pass membrane protein</topology>
    </subcellularLocation>
    <subcellularLocation>
        <location evidence="2">Cell outer membrane</location>
        <topology evidence="2">Multi-pass membrane protein</topology>
    </subcellularLocation>
</comment>
<comment type="PTM">
    <text>The N-terminus is blocked.</text>
</comment>
<comment type="mass spectrometry">
    <text>Reported mass includes mass of a C-terminal His6 tag.</text>
</comment>
<comment type="miscellaneous">
    <text evidence="6">The enzyme active site contains a catalytic triad that establishes a charge relay system. This catalytic triad is essential for the dephosphorylation of LPA, PA, and sphingosine-1-phosphate, but is not essential in its entirety for the dephosphorylation of PGP, the nucleophilic histidine alone is sufficient to hydrolyze PGP.</text>
</comment>
<comment type="similarity">
    <text evidence="8">Belongs to the PA-phosphatase related phosphoesterase family.</text>
</comment>
<protein>
    <recommendedName>
        <fullName>Phosphatidylglycerophosphatase B</fullName>
        <ecNumber>3.1.3.27</ecNumber>
    </recommendedName>
    <alternativeName>
        <fullName>Diacylglycerol pyrophosphate phosphatase</fullName>
        <shortName>DGPP phosphatase</shortName>
        <ecNumber>3.6.1.75</ecNumber>
    </alternativeName>
    <alternativeName>
        <fullName>Phosphatidate phosphatase</fullName>
        <ecNumber>3.1.3.4</ecNumber>
    </alternativeName>
    <alternativeName>
        <fullName>Undecaprenyl pyrophosphate phosphatase</fullName>
        <ecNumber>3.6.1.27</ecNumber>
    </alternativeName>
    <alternativeName>
        <fullName>Undecaprenyl-diphosphatase</fullName>
    </alternativeName>
</protein>
<gene>
    <name type="primary">pgpB</name>
    <name type="ordered locus">b1278</name>
    <name type="ordered locus">JW1270</name>
</gene>
<keyword id="KW-0002">3D-structure</keyword>
<keyword id="KW-0997">Cell inner membrane</keyword>
<keyword id="KW-1003">Cell membrane</keyword>
<keyword id="KW-0998">Cell outer membrane</keyword>
<keyword id="KW-0903">Direct protein sequencing</keyword>
<keyword id="KW-0378">Hydrolase</keyword>
<keyword id="KW-0442">Lipid degradation</keyword>
<keyword id="KW-0443">Lipid metabolism</keyword>
<keyword id="KW-0472">Membrane</keyword>
<keyword id="KW-0595">Phospholipid degradation</keyword>
<keyword id="KW-1208">Phospholipid metabolism</keyword>
<keyword id="KW-1185">Reference proteome</keyword>
<keyword id="KW-0812">Transmembrane</keyword>
<keyword id="KW-1133">Transmembrane helix</keyword>
<dbReference type="EC" id="3.1.3.27"/>
<dbReference type="EC" id="3.6.1.75"/>
<dbReference type="EC" id="3.1.3.4"/>
<dbReference type="EC" id="3.6.1.27"/>
<dbReference type="EMBL" id="M23628">
    <property type="protein sequence ID" value="AAB36618.1"/>
    <property type="molecule type" value="Unassigned_DNA"/>
</dbReference>
<dbReference type="EMBL" id="U00096">
    <property type="protein sequence ID" value="AAC74360.1"/>
    <property type="molecule type" value="Genomic_DNA"/>
</dbReference>
<dbReference type="EMBL" id="AP009048">
    <property type="protein sequence ID" value="BAA14832.1"/>
    <property type="molecule type" value="Genomic_DNA"/>
</dbReference>
<dbReference type="PIR" id="A30193">
    <property type="entry name" value="PAECGB"/>
</dbReference>
<dbReference type="RefSeq" id="NP_415794.1">
    <property type="nucleotide sequence ID" value="NC_000913.3"/>
</dbReference>
<dbReference type="RefSeq" id="WP_001256538.1">
    <property type="nucleotide sequence ID" value="NZ_STEB01000005.1"/>
</dbReference>
<dbReference type="PDB" id="4PX7">
    <property type="method" value="X-ray"/>
    <property type="resolution" value="3.20 A"/>
    <property type="chains" value="A=2-254"/>
</dbReference>
<dbReference type="PDB" id="5JWY">
    <property type="method" value="X-ray"/>
    <property type="resolution" value="3.20 A"/>
    <property type="chains" value="A=1-254"/>
</dbReference>
<dbReference type="PDB" id="8BM3">
    <property type="method" value="X-ray"/>
    <property type="resolution" value="3.50 A"/>
    <property type="chains" value="A/B/C/D=1-254"/>
</dbReference>
<dbReference type="PDBsum" id="4PX7"/>
<dbReference type="PDBsum" id="5JWY"/>
<dbReference type="PDBsum" id="8BM3"/>
<dbReference type="SMR" id="P0A924"/>
<dbReference type="BioGRID" id="4262195">
    <property type="interactions" value="217"/>
</dbReference>
<dbReference type="FunCoup" id="P0A924">
    <property type="interactions" value="60"/>
</dbReference>
<dbReference type="IntAct" id="P0A924">
    <property type="interactions" value="1"/>
</dbReference>
<dbReference type="STRING" id="511145.b1278"/>
<dbReference type="PaxDb" id="511145-b1278"/>
<dbReference type="EnsemblBacteria" id="AAC74360">
    <property type="protein sequence ID" value="AAC74360"/>
    <property type="gene ID" value="b1278"/>
</dbReference>
<dbReference type="GeneID" id="75203391"/>
<dbReference type="GeneID" id="945863"/>
<dbReference type="KEGG" id="ecj:JW1270"/>
<dbReference type="KEGG" id="eco:b1278"/>
<dbReference type="KEGG" id="ecoc:C3026_07505"/>
<dbReference type="PATRIC" id="fig|1411691.4.peg.1003"/>
<dbReference type="EchoBASE" id="EB0699"/>
<dbReference type="eggNOG" id="COG0671">
    <property type="taxonomic scope" value="Bacteria"/>
</dbReference>
<dbReference type="HOGENOM" id="CLU_083863_0_0_6"/>
<dbReference type="InParanoid" id="P0A924"/>
<dbReference type="OMA" id="AWFLWCL"/>
<dbReference type="OrthoDB" id="5586741at2"/>
<dbReference type="PhylomeDB" id="P0A924"/>
<dbReference type="BioCyc" id="EcoCyc:PGPPHOSPHAB-MONOMER"/>
<dbReference type="BioCyc" id="MetaCyc:PGPPHOSPHAB-MONOMER"/>
<dbReference type="BRENDA" id="3.1.3.27">
    <property type="organism ID" value="2026"/>
</dbReference>
<dbReference type="UniPathway" id="UPA00084">
    <property type="reaction ID" value="UER00504"/>
</dbReference>
<dbReference type="PRO" id="PR:P0A924"/>
<dbReference type="Proteomes" id="UP000000625">
    <property type="component" value="Chromosome"/>
</dbReference>
<dbReference type="GO" id="GO:0009279">
    <property type="term" value="C:cell outer membrane"/>
    <property type="evidence" value="ECO:0000315"/>
    <property type="project" value="EcoCyc"/>
</dbReference>
<dbReference type="GO" id="GO:0005886">
    <property type="term" value="C:plasma membrane"/>
    <property type="evidence" value="ECO:0000314"/>
    <property type="project" value="EcoCyc"/>
</dbReference>
<dbReference type="GO" id="GO:0000810">
    <property type="term" value="F:diacylglycerol diphosphate phosphatase activity"/>
    <property type="evidence" value="ECO:0007669"/>
    <property type="project" value="RHEA"/>
</dbReference>
<dbReference type="GO" id="GO:0008195">
    <property type="term" value="F:phosphatidate phosphatase activity"/>
    <property type="evidence" value="ECO:0007669"/>
    <property type="project" value="UniProtKB-EC"/>
</dbReference>
<dbReference type="GO" id="GO:0008962">
    <property type="term" value="F:phosphatidylglycerophosphatase activity"/>
    <property type="evidence" value="ECO:0000315"/>
    <property type="project" value="EcoCyc"/>
</dbReference>
<dbReference type="GO" id="GO:0050380">
    <property type="term" value="F:undecaprenyl-diphosphatase activity"/>
    <property type="evidence" value="ECO:0000314"/>
    <property type="project" value="EcoCyc"/>
</dbReference>
<dbReference type="GO" id="GO:0046474">
    <property type="term" value="P:glycerophospholipid biosynthetic process"/>
    <property type="evidence" value="ECO:0000315"/>
    <property type="project" value="EcoCyc"/>
</dbReference>
<dbReference type="GO" id="GO:0009252">
    <property type="term" value="P:peptidoglycan biosynthetic process"/>
    <property type="evidence" value="ECO:0000315"/>
    <property type="project" value="EcoCyc"/>
</dbReference>
<dbReference type="GO" id="GO:0006655">
    <property type="term" value="P:phosphatidylglycerol biosynthetic process"/>
    <property type="evidence" value="ECO:0007669"/>
    <property type="project" value="UniProtKB-UniPathway"/>
</dbReference>
<dbReference type="GO" id="GO:0009395">
    <property type="term" value="P:phospholipid catabolic process"/>
    <property type="evidence" value="ECO:0007669"/>
    <property type="project" value="UniProtKB-KW"/>
</dbReference>
<dbReference type="CDD" id="cd01610">
    <property type="entry name" value="PAP2_like"/>
    <property type="match status" value="1"/>
</dbReference>
<dbReference type="FunFam" id="1.20.144.10:FF:000008">
    <property type="entry name" value="Phosphatidylglycerophosphatase B"/>
    <property type="match status" value="1"/>
</dbReference>
<dbReference type="Gene3D" id="1.20.144.10">
    <property type="entry name" value="Phosphatidic acid phosphatase type 2/haloperoxidase"/>
    <property type="match status" value="1"/>
</dbReference>
<dbReference type="InterPro" id="IPR036938">
    <property type="entry name" value="P_Acid_Pase_2/haloperoxi_sf"/>
</dbReference>
<dbReference type="InterPro" id="IPR000326">
    <property type="entry name" value="P_Acid_Pase_2/haloperoxidase"/>
</dbReference>
<dbReference type="NCBIfam" id="NF007975">
    <property type="entry name" value="PRK10699.1"/>
    <property type="match status" value="1"/>
</dbReference>
<dbReference type="PANTHER" id="PTHR14969:SF54">
    <property type="entry name" value="PHOSPHATIDYLGLYCEROPHOSPHATASE B"/>
    <property type="match status" value="1"/>
</dbReference>
<dbReference type="PANTHER" id="PTHR14969">
    <property type="entry name" value="SPHINGOSINE-1-PHOSPHATE PHOSPHOHYDROLASE"/>
    <property type="match status" value="1"/>
</dbReference>
<dbReference type="Pfam" id="PF01569">
    <property type="entry name" value="PAP2"/>
    <property type="match status" value="1"/>
</dbReference>
<dbReference type="SMART" id="SM00014">
    <property type="entry name" value="acidPPc"/>
    <property type="match status" value="1"/>
</dbReference>
<dbReference type="SUPFAM" id="SSF48317">
    <property type="entry name" value="Acid phosphatase/Vanadium-dependent haloperoxidase"/>
    <property type="match status" value="1"/>
</dbReference>
<evidence type="ECO:0000269" key="1">
    <source>
    </source>
</evidence>
<evidence type="ECO:0000269" key="2">
    <source>
    </source>
</evidence>
<evidence type="ECO:0000269" key="3">
    <source>
    </source>
</evidence>
<evidence type="ECO:0000269" key="4">
    <source>
    </source>
</evidence>
<evidence type="ECO:0000269" key="5">
    <source>
    </source>
</evidence>
<evidence type="ECO:0000269" key="6">
    <source>
    </source>
</evidence>
<evidence type="ECO:0000269" key="7">
    <source>
    </source>
</evidence>
<evidence type="ECO:0000305" key="8"/>
<evidence type="ECO:0000305" key="9">
    <source>
    </source>
</evidence>
<evidence type="ECO:0000305" key="10">
    <source>
    </source>
</evidence>
<evidence type="ECO:0007829" key="11">
    <source>
        <dbReference type="PDB" id="5JWY"/>
    </source>
</evidence>
<organism>
    <name type="scientific">Escherichia coli (strain K12)</name>
    <dbReference type="NCBI Taxonomy" id="83333"/>
    <lineage>
        <taxon>Bacteria</taxon>
        <taxon>Pseudomonadati</taxon>
        <taxon>Pseudomonadota</taxon>
        <taxon>Gammaproteobacteria</taxon>
        <taxon>Enterobacterales</taxon>
        <taxon>Enterobacteriaceae</taxon>
        <taxon>Escherichia</taxon>
    </lineage>
</organism>
<name>PGPB_ECOLI</name>
<feature type="initiator methionine" description="Removed">
    <location>
        <position position="1"/>
    </location>
</feature>
<feature type="chain" id="PRO_0000058362" description="Phosphatidylglycerophosphatase B">
    <location>
        <begin position="2"/>
        <end position="254"/>
    </location>
</feature>
<feature type="transmembrane region" description="Helical" evidence="5">
    <location>
        <begin position="2"/>
        <end position="24"/>
    </location>
</feature>
<feature type="topological domain" description="Periplasmic" evidence="9">
    <location>
        <begin position="25"/>
        <end position="54"/>
    </location>
</feature>
<feature type="transmembrane region" description="Helical" evidence="5">
    <location>
        <begin position="55"/>
        <end position="66"/>
    </location>
</feature>
<feature type="topological domain" description="Cytoplasmic" evidence="9">
    <location>
        <begin position="67"/>
        <end position="71"/>
    </location>
</feature>
<feature type="transmembrane region" description="Helical" evidence="5">
    <location>
        <begin position="72"/>
        <end position="94"/>
    </location>
</feature>
<feature type="topological domain" description="Periplasmic" evidence="9">
    <location>
        <begin position="95"/>
        <end position="161"/>
    </location>
</feature>
<feature type="transmembrane region" description="Helical" evidence="5">
    <location>
        <begin position="162"/>
        <end position="176"/>
    </location>
</feature>
<feature type="topological domain" description="Cytoplasmic" evidence="9">
    <location>
        <begin position="177"/>
        <end position="182"/>
    </location>
</feature>
<feature type="transmembrane region" description="Helical" evidence="5">
    <location>
        <begin position="183"/>
        <end position="202"/>
    </location>
</feature>
<feature type="topological domain" description="Periplasmic" evidence="9">
    <location>
        <begin position="203"/>
        <end position="208"/>
    </location>
</feature>
<feature type="transmembrane region" description="Helical" evidence="5">
    <location>
        <begin position="209"/>
        <end position="232"/>
    </location>
</feature>
<feature type="topological domain" description="Cytoplasmic" evidence="9">
    <location>
        <begin position="233"/>
        <end position="254"/>
    </location>
</feature>
<feature type="region of interest" description="Phosphatase sequence motif I" evidence="8">
    <location>
        <begin position="97"/>
        <end position="105"/>
    </location>
</feature>
<feature type="region of interest" description="Phosphatase sequence motif II" evidence="8">
    <location>
        <begin position="160"/>
        <end position="163"/>
    </location>
</feature>
<feature type="region of interest" description="Phosphatase sequence motif III" evidence="8">
    <location>
        <begin position="200"/>
        <end position="211"/>
    </location>
</feature>
<feature type="active site" description="Proton donor; for a subset of substrates" evidence="6">
    <location>
        <position position="163"/>
    </location>
</feature>
<feature type="active site" description="Nucleophile" evidence="6">
    <location>
        <position position="207"/>
    </location>
</feature>
<feature type="site" description="Stabilizes the active site histidine for nucleophilic attack" evidence="10">
    <location>
        <position position="211"/>
    </location>
</feature>
<feature type="helix" evidence="11">
    <location>
        <begin position="3"/>
        <end position="25"/>
    </location>
</feature>
<feature type="helix" evidence="11">
    <location>
        <begin position="35"/>
        <end position="46"/>
    </location>
</feature>
<feature type="turn" evidence="11">
    <location>
        <begin position="50"/>
        <end position="52"/>
    </location>
</feature>
<feature type="helix" evidence="11">
    <location>
        <begin position="53"/>
        <end position="67"/>
    </location>
</feature>
<feature type="helix" evidence="11">
    <location>
        <begin position="69"/>
        <end position="71"/>
    </location>
</feature>
<feature type="helix" evidence="11">
    <location>
        <begin position="72"/>
        <end position="96"/>
    </location>
</feature>
<feature type="turn" evidence="11">
    <location>
        <begin position="97"/>
        <end position="99"/>
    </location>
</feature>
<feature type="helix" evidence="11">
    <location>
        <begin position="105"/>
        <end position="113"/>
    </location>
</feature>
<feature type="helix" evidence="11">
    <location>
        <begin position="118"/>
        <end position="122"/>
    </location>
</feature>
<feature type="helix" evidence="11">
    <location>
        <begin position="126"/>
        <end position="139"/>
    </location>
</feature>
<feature type="helix" evidence="11">
    <location>
        <begin position="145"/>
        <end position="154"/>
    </location>
</feature>
<feature type="helix" evidence="11">
    <location>
        <begin position="162"/>
        <end position="178"/>
    </location>
</feature>
<feature type="helix" evidence="11">
    <location>
        <begin position="179"/>
        <end position="181"/>
    </location>
</feature>
<feature type="helix" evidence="11">
    <location>
        <begin position="184"/>
        <end position="203"/>
    </location>
</feature>
<feature type="helix" evidence="11">
    <location>
        <begin position="209"/>
        <end position="234"/>
    </location>
</feature>
<feature type="helix" evidence="11">
    <location>
        <begin position="241"/>
        <end position="254"/>
    </location>
</feature>
<reference key="1">
    <citation type="journal article" date="1988" name="J. Bacteriol.">
        <title>Membrane-bound phosphatases in Escherichia coli: sequence of the pgpB gene and dual subcellular localization of the pgpB product.</title>
        <authorList>
            <person name="Icho T."/>
        </authorList>
    </citation>
    <scope>NUCLEOTIDE SEQUENCE [GENOMIC DNA]</scope>
    <scope>PROTEIN SEQUENCE OF 19-28</scope>
    <scope>DUAL SUBCELLULAR LOCATION</scope>
    <source>
        <strain>K12 / CS520</strain>
    </source>
</reference>
<reference key="2">
    <citation type="journal article" date="1996" name="DNA Res.">
        <title>A 570-kb DNA sequence of the Escherichia coli K-12 genome corresponding to the 28.0-40.1 min region on the linkage map.</title>
        <authorList>
            <person name="Aiba H."/>
            <person name="Baba T."/>
            <person name="Fujita K."/>
            <person name="Hayashi K."/>
            <person name="Inada T."/>
            <person name="Isono K."/>
            <person name="Itoh T."/>
            <person name="Kasai H."/>
            <person name="Kashimoto K."/>
            <person name="Kimura S."/>
            <person name="Kitakawa M."/>
            <person name="Kitagawa M."/>
            <person name="Makino K."/>
            <person name="Miki T."/>
            <person name="Mizobuchi K."/>
            <person name="Mori H."/>
            <person name="Mori T."/>
            <person name="Motomura K."/>
            <person name="Nakade S."/>
            <person name="Nakamura Y."/>
            <person name="Nashimoto H."/>
            <person name="Nishio Y."/>
            <person name="Oshima T."/>
            <person name="Saito N."/>
            <person name="Sampei G."/>
            <person name="Seki Y."/>
            <person name="Sivasundaram S."/>
            <person name="Tagami H."/>
            <person name="Takeda J."/>
            <person name="Takemoto K."/>
            <person name="Takeuchi Y."/>
            <person name="Wada C."/>
            <person name="Yamamoto Y."/>
            <person name="Horiuchi T."/>
        </authorList>
    </citation>
    <scope>NUCLEOTIDE SEQUENCE [LARGE SCALE GENOMIC DNA]</scope>
    <source>
        <strain>K12 / W3110 / ATCC 27325 / DSM 5911</strain>
    </source>
</reference>
<reference key="3">
    <citation type="journal article" date="1997" name="Science">
        <title>The complete genome sequence of Escherichia coli K-12.</title>
        <authorList>
            <person name="Blattner F.R."/>
            <person name="Plunkett G. III"/>
            <person name="Bloch C.A."/>
            <person name="Perna N.T."/>
            <person name="Burland V."/>
            <person name="Riley M."/>
            <person name="Collado-Vides J."/>
            <person name="Glasner J.D."/>
            <person name="Rode C.K."/>
            <person name="Mayhew G.F."/>
            <person name="Gregor J."/>
            <person name="Davis N.W."/>
            <person name="Kirkpatrick H.A."/>
            <person name="Goeden M.A."/>
            <person name="Rose D.J."/>
            <person name="Mau B."/>
            <person name="Shao Y."/>
        </authorList>
    </citation>
    <scope>NUCLEOTIDE SEQUENCE [LARGE SCALE GENOMIC DNA]</scope>
    <source>
        <strain>K12 / MG1655 / ATCC 47076</strain>
    </source>
</reference>
<reference key="4">
    <citation type="journal article" date="2006" name="Mol. Syst. Biol.">
        <title>Highly accurate genome sequences of Escherichia coli K-12 strains MG1655 and W3110.</title>
        <authorList>
            <person name="Hayashi K."/>
            <person name="Morooka N."/>
            <person name="Yamamoto Y."/>
            <person name="Fujita K."/>
            <person name="Isono K."/>
            <person name="Choi S."/>
            <person name="Ohtsubo E."/>
            <person name="Baba T."/>
            <person name="Wanner B.L."/>
            <person name="Mori H."/>
            <person name="Horiuchi T."/>
        </authorList>
    </citation>
    <scope>NUCLEOTIDE SEQUENCE [LARGE SCALE GENOMIC DNA]</scope>
    <source>
        <strain>K12 / W3110 / ATCC 27325 / DSM 5911</strain>
    </source>
</reference>
<reference key="5">
    <citation type="journal article" date="1996" name="J. Biol. Chem.">
        <title>The Escherichia coli pgpB gene encodes for a diacylglycerol pyrophosphate phosphatase activity.</title>
        <authorList>
            <person name="Dillon D.A."/>
            <person name="Wu W.I."/>
            <person name="Riedel B."/>
            <person name="Wissing J.B."/>
            <person name="Dowhan W."/>
            <person name="Carman G.M."/>
        </authorList>
    </citation>
    <scope>FUNCTION</scope>
    <scope>CATALYTIC ACTIVITY</scope>
    <scope>BIOPHYSICOCHEMICAL PROPERTIES</scope>
    <source>
        <strain>K12</strain>
    </source>
</reference>
<reference key="6">
    <citation type="journal article" date="2005" name="J. Biol. Chem.">
        <title>Identification of multiple genes encoding membrane proteins with undecaprenyl pyrophosphate phosphatase (UppP) activity in Escherichia coli.</title>
        <authorList>
            <person name="El Ghachi M."/>
            <person name="Derbise A."/>
            <person name="Bouhss A."/>
            <person name="Mengin-Lecreulx D."/>
        </authorList>
    </citation>
    <scope>FUNCTION</scope>
</reference>
<reference key="7">
    <citation type="journal article" date="2005" name="Science">
        <title>Global topology analysis of the Escherichia coli inner membrane proteome.</title>
        <authorList>
            <person name="Daley D.O."/>
            <person name="Rapp M."/>
            <person name="Granseth E."/>
            <person name="Melen K."/>
            <person name="Drew D."/>
            <person name="von Heijne G."/>
        </authorList>
    </citation>
    <scope>SUBCELLULAR LOCATION</scope>
    <source>
        <strain>K12 / MG1655 / ATCC 47076</strain>
    </source>
</reference>
<reference key="8">
    <citation type="journal article" date="2008" name="J. Biol. Chem.">
        <title>Substrate specificity and membrane topology of Escherichia coli PgpB, an undecaprenyl pyrophosphate phosphatase.</title>
        <authorList>
            <person name="Touze T."/>
            <person name="Blanot D."/>
            <person name="Mengin-Lecreulx D."/>
        </authorList>
    </citation>
    <scope>FUNCTION</scope>
    <scope>CATALYTIC ACTIVITY</scope>
    <scope>SUBSTRATE SPECIFICITY</scope>
    <scope>BIOPHYSICOCHEMICAL PROPERTIES</scope>
    <scope>MASS SPECTROMETRY</scope>
</reference>
<reference key="9">
    <citation type="journal article" date="2011" name="J. Biol. Chem.">
        <title>Three phosphatidylglycerol-phosphate phosphatases in the inner membrane of Escherichia coli.</title>
        <authorList>
            <person name="Lu Y.H."/>
            <person name="Guan Z."/>
            <person name="Zhao J."/>
            <person name="Raetz C.R."/>
        </authorList>
    </citation>
    <scope>FUNCTION</scope>
    <source>
        <strain>K12 / W3110 / ATCC 27325 / DSM 5911</strain>
    </source>
</reference>
<reference key="10">
    <citation type="journal article" date="2014" name="Proc. Natl. Acad. Sci. U.S.A.">
        <title>Crystal structure of lipid phosphatase Escherichia coli phosphatidylglycerophosphate phosphatase B.</title>
        <authorList>
            <person name="Fan J."/>
            <person name="Jiang D."/>
            <person name="Zhao Y."/>
            <person name="Liu J."/>
            <person name="Zhang X.C."/>
        </authorList>
    </citation>
    <scope>X-RAY CRYSTALLOGRAPHY (3.20 ANGSTROMS)</scope>
    <source>
        <strain>B / BL21-DE3</strain>
    </source>
</reference>
<reference key="11">
    <citation type="journal article" date="2016" name="J. Biol. Chem.">
        <title>Structural insight into substrate selection and catalysis of lipid phosphate phosphatase PgpB in the cell membrane.</title>
        <authorList>
            <person name="Tong S."/>
            <person name="Lin Y."/>
            <person name="Lu S."/>
            <person name="Wang M."/>
            <person name="Bogdanov M."/>
            <person name="Zheng L."/>
        </authorList>
    </citation>
    <scope>X-RAY CRYSTALLOGRAPHY (3.20 ANGSTROMS) IN COMPLEX WITH INHIBITOR</scope>
    <scope>ACTIVITY REGULATION</scope>
</reference>